<name>CYAS_METHJ</name>
<keyword id="KW-0174">Coenzyme M biosynthesis</keyword>
<keyword id="KW-0663">Pyridoxal phosphate</keyword>
<keyword id="KW-1185">Reference proteome</keyword>
<keyword id="KW-0808">Transferase</keyword>
<organism>
    <name type="scientific">Methanospirillum hungatei JF-1 (strain ATCC 27890 / DSM 864 / NBRC 100397 / JF-1)</name>
    <dbReference type="NCBI Taxonomy" id="323259"/>
    <lineage>
        <taxon>Archaea</taxon>
        <taxon>Methanobacteriati</taxon>
        <taxon>Methanobacteriota</taxon>
        <taxon>Stenosarchaea group</taxon>
        <taxon>Methanomicrobia</taxon>
        <taxon>Methanomicrobiales</taxon>
        <taxon>Methanospirillaceae</taxon>
        <taxon>Methanospirillum</taxon>
    </lineage>
</organism>
<protein>
    <recommendedName>
        <fullName evidence="1">Cysteate synthase</fullName>
        <shortName evidence="1">CS</shortName>
        <shortName evidence="1">Cya synthase</shortName>
        <ecNumber evidence="1">2.5.1.76</ecNumber>
    </recommendedName>
</protein>
<dbReference type="EC" id="2.5.1.76" evidence="1"/>
<dbReference type="EMBL" id="CP000254">
    <property type="protein sequence ID" value="ABD42664.1"/>
    <property type="molecule type" value="Genomic_DNA"/>
</dbReference>
<dbReference type="RefSeq" id="WP_011449917.1">
    <property type="nucleotide sequence ID" value="NC_007796.1"/>
</dbReference>
<dbReference type="SMR" id="Q2FSC3"/>
<dbReference type="STRING" id="323259.Mhun_2977"/>
<dbReference type="EnsemblBacteria" id="ABD42664">
    <property type="protein sequence ID" value="ABD42664"/>
    <property type="gene ID" value="Mhun_2977"/>
</dbReference>
<dbReference type="GeneID" id="3922460"/>
<dbReference type="KEGG" id="mhu:Mhun_2977"/>
<dbReference type="eggNOG" id="arCOG01434">
    <property type="taxonomic scope" value="Archaea"/>
</dbReference>
<dbReference type="HOGENOM" id="CLU_666687_0_0_2"/>
<dbReference type="InParanoid" id="Q2FSC3"/>
<dbReference type="OrthoDB" id="6371at2157"/>
<dbReference type="UniPathway" id="UPA00355"/>
<dbReference type="Proteomes" id="UP000001941">
    <property type="component" value="Chromosome"/>
</dbReference>
<dbReference type="GO" id="GO:0044686">
    <property type="term" value="F:cysteate synthase activity"/>
    <property type="evidence" value="ECO:0007669"/>
    <property type="project" value="UniProtKB-UniRule"/>
</dbReference>
<dbReference type="GO" id="GO:0030170">
    <property type="term" value="F:pyridoxal phosphate binding"/>
    <property type="evidence" value="ECO:0007669"/>
    <property type="project" value="UniProtKB-UniRule"/>
</dbReference>
<dbReference type="GO" id="GO:0019295">
    <property type="term" value="P:coenzyme M biosynthetic process"/>
    <property type="evidence" value="ECO:0007669"/>
    <property type="project" value="UniProtKB-UniRule"/>
</dbReference>
<dbReference type="Gene3D" id="3.40.50.1100">
    <property type="match status" value="2"/>
</dbReference>
<dbReference type="HAMAP" id="MF_02109">
    <property type="entry name" value="Cya_synthase"/>
    <property type="match status" value="1"/>
</dbReference>
<dbReference type="InterPro" id="IPR022401">
    <property type="entry name" value="Cysteate_synthase"/>
</dbReference>
<dbReference type="InterPro" id="IPR001926">
    <property type="entry name" value="TrpB-like_PALP"/>
</dbReference>
<dbReference type="InterPro" id="IPR036052">
    <property type="entry name" value="TrpB-like_PALP_sf"/>
</dbReference>
<dbReference type="NCBIfam" id="TIGR03844">
    <property type="entry name" value="cysteate_syn"/>
    <property type="match status" value="1"/>
</dbReference>
<dbReference type="Pfam" id="PF00291">
    <property type="entry name" value="PALP"/>
    <property type="match status" value="1"/>
</dbReference>
<dbReference type="SUPFAM" id="SSF53686">
    <property type="entry name" value="Tryptophan synthase beta subunit-like PLP-dependent enzymes"/>
    <property type="match status" value="1"/>
</dbReference>
<accession>Q2FSC3</accession>
<gene>
    <name type="ordered locus">Mhun_2977</name>
</gene>
<feature type="chain" id="PRO_0000392655" description="Cysteate synthase">
    <location>
        <begin position="1"/>
        <end position="422"/>
    </location>
</feature>
<feature type="binding site" evidence="1">
    <location>
        <position position="131"/>
    </location>
    <ligand>
        <name>pyridoxal 5'-phosphate</name>
        <dbReference type="ChEBI" id="CHEBI:597326"/>
    </ligand>
</feature>
<feature type="binding site" evidence="1">
    <location>
        <position position="379"/>
    </location>
    <ligand>
        <name>pyridoxal 5'-phosphate</name>
        <dbReference type="ChEBI" id="CHEBI:597326"/>
    </ligand>
</feature>
<feature type="modified residue" description="N6-(pyridoxal phosphate)lysine" evidence="1">
    <location>
        <position position="105"/>
    </location>
</feature>
<comment type="function">
    <text evidence="1">Specifically catalyzes the beta-elimination of phosphate from L-phosphoserine and the beta-addition of sulfite to the dehydroalanine intermediate to produce L-cysteate.</text>
</comment>
<comment type="catalytic activity">
    <reaction evidence="1">
        <text>O-phospho-L-serine + sulfite + H(+) = L-cysteate + phosphate</text>
        <dbReference type="Rhea" id="RHEA:26486"/>
        <dbReference type="ChEBI" id="CHEBI:15378"/>
        <dbReference type="ChEBI" id="CHEBI:17359"/>
        <dbReference type="ChEBI" id="CHEBI:43474"/>
        <dbReference type="ChEBI" id="CHEBI:57524"/>
        <dbReference type="ChEBI" id="CHEBI:58090"/>
        <dbReference type="EC" id="2.5.1.76"/>
    </reaction>
</comment>
<comment type="cofactor">
    <cofactor evidence="1">
        <name>pyridoxal 5'-phosphate</name>
        <dbReference type="ChEBI" id="CHEBI:597326"/>
    </cofactor>
</comment>
<comment type="pathway">
    <text evidence="1">Cofactor biosynthesis; coenzyme M biosynthesis.</text>
</comment>
<comment type="subunit">
    <text evidence="1">Homotrimer.</text>
</comment>
<comment type="similarity">
    <text evidence="1">Belongs to the threonine synthase family. Cysteate synthase subfamily.</text>
</comment>
<reference key="1">
    <citation type="journal article" date="2016" name="Stand. Genomic Sci.">
        <title>Complete genome sequence of Methanospirillum hungatei type strain JF1.</title>
        <authorList>
            <person name="Gunsalus R.P."/>
            <person name="Cook L.E."/>
            <person name="Crable B."/>
            <person name="Rohlin L."/>
            <person name="McDonald E."/>
            <person name="Mouttaki H."/>
            <person name="Sieber J.R."/>
            <person name="Poweleit N."/>
            <person name="Zhou H."/>
            <person name="Lapidus A.L."/>
            <person name="Daligault H.E."/>
            <person name="Land M."/>
            <person name="Gilna P."/>
            <person name="Ivanova N."/>
            <person name="Kyrpides N."/>
            <person name="Culley D.E."/>
            <person name="McInerney M.J."/>
        </authorList>
    </citation>
    <scope>NUCLEOTIDE SEQUENCE [LARGE SCALE GENOMIC DNA]</scope>
    <source>
        <strain>ATCC 27890 / DSM 864 / NBRC 100397 / JF-1</strain>
    </source>
</reference>
<proteinExistence type="inferred from homology"/>
<sequence length="422" mass="45660">MTGYTLTCPVCNKEFSDSYTLTCPGGCQGLIRAKYAARQITLHDAPGVFKYMDWLPVTGVLRTRAEPVCFKSEGLARALGLSDLWIVFSGYWPEVGAFAVSGSFKEFEAFPTMQRLSERTKGIIQVSSAGNTGRAFAEVSAETCQPVIIVVPESARDRLFTTSPAHDTLLITISGDYTDAINLGSRICTLPGIFPEGGAKNVARRDGMGTVMLAGTLAMGTLPDWYLQAVGSGTGGIAAYEASLRLIADGRFGTRMPRLLLFQNEPFIPMVRAWQEKRREIKDEDMPDAEQAISQVYSDVLTNRTPPYGIVGGVFDTLIATNGLMAGVSSADAQEAGKLFSSSEGIDPDPAAAVCVAGLMRAVRSGVIKPDEKILLNITGGGYARGRKDLPRFVKAPDIMVSKETPFEKISAKVQEWMRYYA</sequence>
<evidence type="ECO:0000255" key="1">
    <source>
        <dbReference type="HAMAP-Rule" id="MF_02109"/>
    </source>
</evidence>